<evidence type="ECO:0000255" key="1">
    <source>
        <dbReference type="HAMAP-Rule" id="MF_01077"/>
    </source>
</evidence>
<dbReference type="EMBL" id="CP001177">
    <property type="protein sequence ID" value="ACJ81264.1"/>
    <property type="molecule type" value="Genomic_DNA"/>
</dbReference>
<dbReference type="SMR" id="B7HLF0"/>
<dbReference type="KEGG" id="bcr:BCAH187_A3864"/>
<dbReference type="HOGENOM" id="CLU_070525_2_0_9"/>
<dbReference type="Proteomes" id="UP000002214">
    <property type="component" value="Chromosome"/>
</dbReference>
<dbReference type="GO" id="GO:0005829">
    <property type="term" value="C:cytosol"/>
    <property type="evidence" value="ECO:0007669"/>
    <property type="project" value="TreeGrafter"/>
</dbReference>
<dbReference type="GO" id="GO:0000028">
    <property type="term" value="P:ribosomal small subunit assembly"/>
    <property type="evidence" value="ECO:0007669"/>
    <property type="project" value="TreeGrafter"/>
</dbReference>
<dbReference type="GO" id="GO:0006412">
    <property type="term" value="P:translation"/>
    <property type="evidence" value="ECO:0007669"/>
    <property type="project" value="TreeGrafter"/>
</dbReference>
<dbReference type="CDD" id="cd01734">
    <property type="entry name" value="YlxS_C"/>
    <property type="match status" value="1"/>
</dbReference>
<dbReference type="FunFam" id="2.30.30.180:FF:000002">
    <property type="entry name" value="Ribosome maturation factor RimP"/>
    <property type="match status" value="1"/>
</dbReference>
<dbReference type="FunFam" id="3.30.300.70:FF:000001">
    <property type="entry name" value="Ribosome maturation factor RimP"/>
    <property type="match status" value="1"/>
</dbReference>
<dbReference type="Gene3D" id="2.30.30.180">
    <property type="entry name" value="Ribosome maturation factor RimP, C-terminal domain"/>
    <property type="match status" value="1"/>
</dbReference>
<dbReference type="Gene3D" id="3.30.300.70">
    <property type="entry name" value="RimP-like superfamily, N-terminal"/>
    <property type="match status" value="1"/>
</dbReference>
<dbReference type="HAMAP" id="MF_01077">
    <property type="entry name" value="RimP"/>
    <property type="match status" value="1"/>
</dbReference>
<dbReference type="InterPro" id="IPR003728">
    <property type="entry name" value="Ribosome_maturation_RimP"/>
</dbReference>
<dbReference type="InterPro" id="IPR028998">
    <property type="entry name" value="RimP_C"/>
</dbReference>
<dbReference type="InterPro" id="IPR036847">
    <property type="entry name" value="RimP_C_sf"/>
</dbReference>
<dbReference type="InterPro" id="IPR028989">
    <property type="entry name" value="RimP_N"/>
</dbReference>
<dbReference type="InterPro" id="IPR035956">
    <property type="entry name" value="RimP_N_sf"/>
</dbReference>
<dbReference type="NCBIfam" id="NF000928">
    <property type="entry name" value="PRK00092.1-2"/>
    <property type="match status" value="1"/>
</dbReference>
<dbReference type="PANTHER" id="PTHR33867">
    <property type="entry name" value="RIBOSOME MATURATION FACTOR RIMP"/>
    <property type="match status" value="1"/>
</dbReference>
<dbReference type="PANTHER" id="PTHR33867:SF1">
    <property type="entry name" value="RIBOSOME MATURATION FACTOR RIMP"/>
    <property type="match status" value="1"/>
</dbReference>
<dbReference type="Pfam" id="PF17384">
    <property type="entry name" value="DUF150_C"/>
    <property type="match status" value="1"/>
</dbReference>
<dbReference type="Pfam" id="PF02576">
    <property type="entry name" value="RimP_N"/>
    <property type="match status" value="1"/>
</dbReference>
<dbReference type="SUPFAM" id="SSF74942">
    <property type="entry name" value="YhbC-like, C-terminal domain"/>
    <property type="match status" value="1"/>
</dbReference>
<dbReference type="SUPFAM" id="SSF75420">
    <property type="entry name" value="YhbC-like, N-terminal domain"/>
    <property type="match status" value="1"/>
</dbReference>
<protein>
    <recommendedName>
        <fullName evidence="1">Ribosome maturation factor RimP</fullName>
    </recommendedName>
</protein>
<accession>B7HLF0</accession>
<organism>
    <name type="scientific">Bacillus cereus (strain AH187)</name>
    <dbReference type="NCBI Taxonomy" id="405534"/>
    <lineage>
        <taxon>Bacteria</taxon>
        <taxon>Bacillati</taxon>
        <taxon>Bacillota</taxon>
        <taxon>Bacilli</taxon>
        <taxon>Bacillales</taxon>
        <taxon>Bacillaceae</taxon>
        <taxon>Bacillus</taxon>
        <taxon>Bacillus cereus group</taxon>
    </lineage>
</organism>
<feature type="chain" id="PRO_1000136733" description="Ribosome maturation factor RimP">
    <location>
        <begin position="1"/>
        <end position="156"/>
    </location>
</feature>
<keyword id="KW-0963">Cytoplasm</keyword>
<keyword id="KW-0690">Ribosome biogenesis</keyword>
<reference key="1">
    <citation type="submission" date="2008-10" db="EMBL/GenBank/DDBJ databases">
        <title>Genome sequence of Bacillus cereus AH187.</title>
        <authorList>
            <person name="Dodson R.J."/>
            <person name="Durkin A.S."/>
            <person name="Rosovitz M.J."/>
            <person name="Rasko D.A."/>
            <person name="Kolsto A.B."/>
            <person name="Okstad O.A."/>
            <person name="Ravel J."/>
            <person name="Sutton G."/>
        </authorList>
    </citation>
    <scope>NUCLEOTIDE SEQUENCE [LARGE SCALE GENOMIC DNA]</scope>
    <source>
        <strain>AH187</strain>
    </source>
</reference>
<name>RIMP_BACC7</name>
<gene>
    <name evidence="1" type="primary">rimP</name>
    <name type="ordered locus">BCAH187_A3864</name>
</gene>
<comment type="function">
    <text evidence="1">Required for maturation of 30S ribosomal subunits.</text>
</comment>
<comment type="subcellular location">
    <subcellularLocation>
        <location evidence="1">Cytoplasm</location>
    </subcellularLocation>
</comment>
<comment type="similarity">
    <text evidence="1">Belongs to the RimP family.</text>
</comment>
<sequence length="156" mass="17696">MDKKVTEVVEAFAQPIVEELNLELVDVEYVKEGQDWFLRVFIDSEKGVDIEECGAVSERLSEALDKEDPIPHLYFLDVSSPGAERPLKKEKDFQQAVGKQVAIKTYEPIDGEKMFEGKMLSYDGTTITLLLTIKTRKKEIQIPMDKVANARLAVTF</sequence>
<proteinExistence type="inferred from homology"/>